<feature type="chain" id="PRO_0000397860" description="AP-4 complex subunit sigma">
    <location>
        <begin position="1"/>
        <end position="143"/>
    </location>
</feature>
<accession>O82201</accession>
<name>AP4S_ARATH</name>
<dbReference type="EMBL" id="AC005169">
    <property type="protein sequence ID" value="AAC62137.1"/>
    <property type="molecule type" value="Genomic_DNA"/>
</dbReference>
<dbReference type="EMBL" id="CP002685">
    <property type="protein sequence ID" value="AEC06926.1"/>
    <property type="molecule type" value="Genomic_DNA"/>
</dbReference>
<dbReference type="EMBL" id="AF370185">
    <property type="protein sequence ID" value="AAK44000.1"/>
    <property type="molecule type" value="mRNA"/>
</dbReference>
<dbReference type="EMBL" id="AY059143">
    <property type="protein sequence ID" value="AAL15249.1"/>
    <property type="molecule type" value="mRNA"/>
</dbReference>
<dbReference type="EMBL" id="AY088273">
    <property type="protein sequence ID" value="AAM65813.1"/>
    <property type="molecule type" value="mRNA"/>
</dbReference>
<dbReference type="PIR" id="B84581">
    <property type="entry name" value="B84581"/>
</dbReference>
<dbReference type="RefSeq" id="NP_179569.1">
    <property type="nucleotide sequence ID" value="NM_127537.4"/>
</dbReference>
<dbReference type="SMR" id="O82201"/>
<dbReference type="FunCoup" id="O82201">
    <property type="interactions" value="873"/>
</dbReference>
<dbReference type="STRING" id="3702.O82201"/>
<dbReference type="iPTMnet" id="O82201"/>
<dbReference type="PaxDb" id="3702-AT2G19790.1"/>
<dbReference type="ProteomicsDB" id="244406"/>
<dbReference type="EnsemblPlants" id="AT2G19790.1">
    <property type="protein sequence ID" value="AT2G19790.1"/>
    <property type="gene ID" value="AT2G19790"/>
</dbReference>
<dbReference type="GeneID" id="816498"/>
<dbReference type="Gramene" id="AT2G19790.1">
    <property type="protein sequence ID" value="AT2G19790.1"/>
    <property type="gene ID" value="AT2G19790"/>
</dbReference>
<dbReference type="KEGG" id="ath:AT2G19790"/>
<dbReference type="Araport" id="AT2G19790"/>
<dbReference type="TAIR" id="AT2G19790">
    <property type="gene designation" value="AP4S"/>
</dbReference>
<dbReference type="eggNOG" id="KOG0934">
    <property type="taxonomic scope" value="Eukaryota"/>
</dbReference>
<dbReference type="HOGENOM" id="CLU_061221_4_0_1"/>
<dbReference type="InParanoid" id="O82201"/>
<dbReference type="OMA" id="GHVVETN"/>
<dbReference type="OrthoDB" id="371463at2759"/>
<dbReference type="PhylomeDB" id="O82201"/>
<dbReference type="PRO" id="PR:O82201"/>
<dbReference type="Proteomes" id="UP000006548">
    <property type="component" value="Chromosome 2"/>
</dbReference>
<dbReference type="ExpressionAtlas" id="O82201">
    <property type="expression patterns" value="baseline and differential"/>
</dbReference>
<dbReference type="GO" id="GO:0030124">
    <property type="term" value="C:AP-4 adaptor complex"/>
    <property type="evidence" value="ECO:0000353"/>
    <property type="project" value="TAIR"/>
</dbReference>
<dbReference type="GO" id="GO:0005905">
    <property type="term" value="C:clathrin-coated pit"/>
    <property type="evidence" value="ECO:0007669"/>
    <property type="project" value="UniProtKB-KW"/>
</dbReference>
<dbReference type="GO" id="GO:0005802">
    <property type="term" value="C:trans-Golgi network"/>
    <property type="evidence" value="ECO:0000314"/>
    <property type="project" value="TAIR"/>
</dbReference>
<dbReference type="GO" id="GO:0015031">
    <property type="term" value="P:protein transport"/>
    <property type="evidence" value="ECO:0007669"/>
    <property type="project" value="UniProtKB-KW"/>
</dbReference>
<dbReference type="CDD" id="cd14832">
    <property type="entry name" value="AP4_sigma"/>
    <property type="match status" value="1"/>
</dbReference>
<dbReference type="FunFam" id="3.30.450.60:FF:000010">
    <property type="entry name" value="AP complex subunit sigma"/>
    <property type="match status" value="1"/>
</dbReference>
<dbReference type="Gene3D" id="3.30.450.60">
    <property type="match status" value="1"/>
</dbReference>
<dbReference type="InterPro" id="IPR016635">
    <property type="entry name" value="AP_complex_ssu"/>
</dbReference>
<dbReference type="InterPro" id="IPR022775">
    <property type="entry name" value="AP_mu_sigma_su"/>
</dbReference>
<dbReference type="InterPro" id="IPR011012">
    <property type="entry name" value="Longin-like_dom_sf"/>
</dbReference>
<dbReference type="PANTHER" id="PTHR11753">
    <property type="entry name" value="ADAPTOR COMPLEXES SMALL SUBUNIT FAMILY"/>
    <property type="match status" value="1"/>
</dbReference>
<dbReference type="Pfam" id="PF01217">
    <property type="entry name" value="Clat_adaptor_s"/>
    <property type="match status" value="1"/>
</dbReference>
<dbReference type="PIRSF" id="PIRSF015588">
    <property type="entry name" value="AP_complex_sigma"/>
    <property type="match status" value="1"/>
</dbReference>
<dbReference type="SUPFAM" id="SSF64356">
    <property type="entry name" value="SNARE-like"/>
    <property type="match status" value="1"/>
</dbReference>
<proteinExistence type="evidence at protein level"/>
<evidence type="ECO:0000250" key="1"/>
<evidence type="ECO:0000250" key="2">
    <source>
        <dbReference type="UniProtKB" id="Q9Y587"/>
    </source>
</evidence>
<evidence type="ECO:0000269" key="3">
    <source>
    </source>
</evidence>
<evidence type="ECO:0000305" key="4"/>
<sequence length="143" mass="16921">MGIRFILMVNKQGQTRLAQYYEWLTLEERRALEGEIVRKCLARNDQQCSFVEHRNYKIVYRRYASLFFMVGVDDDENELAILEFIHLLVETMDKHFGNVCELDIMFHLEKAHFMLEEMVMNGCIVETSKANILSPIQLMDKAH</sequence>
<reference key="1">
    <citation type="journal article" date="1999" name="Nature">
        <title>Sequence and analysis of chromosome 2 of the plant Arabidopsis thaliana.</title>
        <authorList>
            <person name="Lin X."/>
            <person name="Kaul S."/>
            <person name="Rounsley S.D."/>
            <person name="Shea T.P."/>
            <person name="Benito M.-I."/>
            <person name="Town C.D."/>
            <person name="Fujii C.Y."/>
            <person name="Mason T.M."/>
            <person name="Bowman C.L."/>
            <person name="Barnstead M.E."/>
            <person name="Feldblyum T.V."/>
            <person name="Buell C.R."/>
            <person name="Ketchum K.A."/>
            <person name="Lee J.J."/>
            <person name="Ronning C.M."/>
            <person name="Koo H.L."/>
            <person name="Moffat K.S."/>
            <person name="Cronin L.A."/>
            <person name="Shen M."/>
            <person name="Pai G."/>
            <person name="Van Aken S."/>
            <person name="Umayam L."/>
            <person name="Tallon L.J."/>
            <person name="Gill J.E."/>
            <person name="Adams M.D."/>
            <person name="Carrera A.J."/>
            <person name="Creasy T.H."/>
            <person name="Goodman H.M."/>
            <person name="Somerville C.R."/>
            <person name="Copenhaver G.P."/>
            <person name="Preuss D."/>
            <person name="Nierman W.C."/>
            <person name="White O."/>
            <person name="Eisen J.A."/>
            <person name="Salzberg S.L."/>
            <person name="Fraser C.M."/>
            <person name="Venter J.C."/>
        </authorList>
    </citation>
    <scope>NUCLEOTIDE SEQUENCE [LARGE SCALE GENOMIC DNA]</scope>
    <source>
        <strain>cv. Columbia</strain>
    </source>
</reference>
<reference key="2">
    <citation type="journal article" date="2017" name="Plant J.">
        <title>Araport11: a complete reannotation of the Arabidopsis thaliana reference genome.</title>
        <authorList>
            <person name="Cheng C.Y."/>
            <person name="Krishnakumar V."/>
            <person name="Chan A.P."/>
            <person name="Thibaud-Nissen F."/>
            <person name="Schobel S."/>
            <person name="Town C.D."/>
        </authorList>
    </citation>
    <scope>GENOME REANNOTATION</scope>
    <source>
        <strain>cv. Columbia</strain>
    </source>
</reference>
<reference key="3">
    <citation type="journal article" date="2003" name="Science">
        <title>Empirical analysis of transcriptional activity in the Arabidopsis genome.</title>
        <authorList>
            <person name="Yamada K."/>
            <person name="Lim J."/>
            <person name="Dale J.M."/>
            <person name="Chen H."/>
            <person name="Shinn P."/>
            <person name="Palm C.J."/>
            <person name="Southwick A.M."/>
            <person name="Wu H.C."/>
            <person name="Kim C.J."/>
            <person name="Nguyen M."/>
            <person name="Pham P.K."/>
            <person name="Cheuk R.F."/>
            <person name="Karlin-Newmann G."/>
            <person name="Liu S.X."/>
            <person name="Lam B."/>
            <person name="Sakano H."/>
            <person name="Wu T."/>
            <person name="Yu G."/>
            <person name="Miranda M."/>
            <person name="Quach H.L."/>
            <person name="Tripp M."/>
            <person name="Chang C.H."/>
            <person name="Lee J.M."/>
            <person name="Toriumi M.J."/>
            <person name="Chan M.M."/>
            <person name="Tang C.C."/>
            <person name="Onodera C.S."/>
            <person name="Deng J.M."/>
            <person name="Akiyama K."/>
            <person name="Ansari Y."/>
            <person name="Arakawa T."/>
            <person name="Banh J."/>
            <person name="Banno F."/>
            <person name="Bowser L."/>
            <person name="Brooks S.Y."/>
            <person name="Carninci P."/>
            <person name="Chao Q."/>
            <person name="Choy N."/>
            <person name="Enju A."/>
            <person name="Goldsmith A.D."/>
            <person name="Gurjal M."/>
            <person name="Hansen N.F."/>
            <person name="Hayashizaki Y."/>
            <person name="Johnson-Hopson C."/>
            <person name="Hsuan V.W."/>
            <person name="Iida K."/>
            <person name="Karnes M."/>
            <person name="Khan S."/>
            <person name="Koesema E."/>
            <person name="Ishida J."/>
            <person name="Jiang P.X."/>
            <person name="Jones T."/>
            <person name="Kawai J."/>
            <person name="Kamiya A."/>
            <person name="Meyers C."/>
            <person name="Nakajima M."/>
            <person name="Narusaka M."/>
            <person name="Seki M."/>
            <person name="Sakurai T."/>
            <person name="Satou M."/>
            <person name="Tamse R."/>
            <person name="Vaysberg M."/>
            <person name="Wallender E.K."/>
            <person name="Wong C."/>
            <person name="Yamamura Y."/>
            <person name="Yuan S."/>
            <person name="Shinozaki K."/>
            <person name="Davis R.W."/>
            <person name="Theologis A."/>
            <person name="Ecker J.R."/>
        </authorList>
    </citation>
    <scope>NUCLEOTIDE SEQUENCE [LARGE SCALE MRNA]</scope>
    <source>
        <strain>cv. Columbia</strain>
    </source>
</reference>
<reference key="4">
    <citation type="submission" date="2002-03" db="EMBL/GenBank/DDBJ databases">
        <title>Full-length cDNA from Arabidopsis thaliana.</title>
        <authorList>
            <person name="Brover V.V."/>
            <person name="Troukhan M.E."/>
            <person name="Alexandrov N.A."/>
            <person name="Lu Y.-P."/>
            <person name="Flavell R.B."/>
            <person name="Feldmann K.A."/>
        </authorList>
    </citation>
    <scope>NUCLEOTIDE SEQUENCE [LARGE SCALE MRNA]</scope>
</reference>
<reference key="5">
    <citation type="journal article" date="2001" name="Mol. Biol. Cell">
        <title>Adaptins: the final recount.</title>
        <authorList>
            <person name="Boehm M."/>
            <person name="Bonifacino J.S."/>
        </authorList>
    </citation>
    <scope>GENE FAMILY</scope>
    <scope>REVIEW</scope>
</reference>
<reference key="6">
    <citation type="journal article" date="2009" name="PLoS ONE">
        <title>The coiled-coil domain of EHD2 mediates inhibition of LeEix2 endocytosis and signaling.</title>
        <authorList>
            <person name="Bar M."/>
            <person name="Sharfman M."/>
            <person name="Schuster S."/>
            <person name="Avni A."/>
        </authorList>
    </citation>
    <scope>INTERACTION WITH EHD2</scope>
</reference>
<comment type="function">
    <text evidence="1">Subunit of novel type of clathrin- or non-clathrin-associated protein coat involved in targeting proteins from the trans-Golgi network (TGN) to the endosomal-lysosomal system.</text>
</comment>
<comment type="subunit">
    <text evidence="2 3">Adaptor protein complex 4 (AP-4) is a heterotetramer composed of two large adaptins (epsilon-type subunit and beta-type subunit), a medium adaptin (mu-type subunit) and a small adaptin (sigma-type subunit) (By similarity). Interacts with EHD2 (PubMed:19936242).</text>
</comment>
<comment type="subcellular location">
    <subcellularLocation>
        <location evidence="1">Golgi apparatus</location>
        <location evidence="1">trans-Golgi network</location>
    </subcellularLocation>
    <subcellularLocation>
        <location evidence="1">Membrane</location>
        <location evidence="1">Coated pit</location>
    </subcellularLocation>
    <text evidence="1">Associated with the trans-Golgi network.</text>
</comment>
<comment type="similarity">
    <text evidence="4">Belongs to the adaptor complexes small subunit family.</text>
</comment>
<organism>
    <name type="scientific">Arabidopsis thaliana</name>
    <name type="common">Mouse-ear cress</name>
    <dbReference type="NCBI Taxonomy" id="3702"/>
    <lineage>
        <taxon>Eukaryota</taxon>
        <taxon>Viridiplantae</taxon>
        <taxon>Streptophyta</taxon>
        <taxon>Embryophyta</taxon>
        <taxon>Tracheophyta</taxon>
        <taxon>Spermatophyta</taxon>
        <taxon>Magnoliopsida</taxon>
        <taxon>eudicotyledons</taxon>
        <taxon>Gunneridae</taxon>
        <taxon>Pentapetalae</taxon>
        <taxon>rosids</taxon>
        <taxon>malvids</taxon>
        <taxon>Brassicales</taxon>
        <taxon>Brassicaceae</taxon>
        <taxon>Camelineae</taxon>
        <taxon>Arabidopsis</taxon>
    </lineage>
</organism>
<gene>
    <name type="ordered locus">At2g19790</name>
    <name type="ORF">F6F22.18</name>
</gene>
<keyword id="KW-0168">Coated pit</keyword>
<keyword id="KW-0333">Golgi apparatus</keyword>
<keyword id="KW-0472">Membrane</keyword>
<keyword id="KW-0653">Protein transport</keyword>
<keyword id="KW-1185">Reference proteome</keyword>
<keyword id="KW-0813">Transport</keyword>
<protein>
    <recommendedName>
        <fullName>AP-4 complex subunit sigma</fullName>
    </recommendedName>
    <alternativeName>
        <fullName>AP-4 adaptor complex subunit sigma</fullName>
    </alternativeName>
    <alternativeName>
        <fullName>Adaptor-related protein complex 4 subunit sigma</fullName>
    </alternativeName>
    <alternativeName>
        <fullName>Sigma subunit of AP-4</fullName>
    </alternativeName>
    <alternativeName>
        <fullName>Sigma4-adaptin</fullName>
    </alternativeName>
</protein>